<name>SECA_RHOCS</name>
<comment type="function">
    <text evidence="1">Part of the Sec protein translocase complex. Interacts with the SecYEG preprotein conducting channel. Has a central role in coupling the hydrolysis of ATP to the transfer of proteins into and across the cell membrane, serving both as a receptor for the preprotein-SecB complex and as an ATP-driven molecular motor driving the stepwise translocation of polypeptide chains across the membrane.</text>
</comment>
<comment type="catalytic activity">
    <reaction evidence="1">
        <text>ATP + H2O + cellular proteinSide 1 = ADP + phosphate + cellular proteinSide 2.</text>
        <dbReference type="EC" id="7.4.2.8"/>
    </reaction>
</comment>
<comment type="cofactor">
    <cofactor evidence="1">
        <name>Zn(2+)</name>
        <dbReference type="ChEBI" id="CHEBI:29105"/>
    </cofactor>
    <text evidence="1">May bind 1 zinc ion per subunit.</text>
</comment>
<comment type="subunit">
    <text evidence="1">Monomer and homodimer. Part of the essential Sec protein translocation apparatus which comprises SecA, SecYEG and auxiliary proteins SecDF-YajC and YidC.</text>
</comment>
<comment type="subcellular location">
    <subcellularLocation>
        <location evidence="1">Cell inner membrane</location>
        <topology evidence="1">Peripheral membrane protein</topology>
        <orientation evidence="1">Cytoplasmic side</orientation>
    </subcellularLocation>
    <subcellularLocation>
        <location evidence="1">Cytoplasm</location>
    </subcellularLocation>
    <text evidence="1">Distribution is 50-50.</text>
</comment>
<comment type="similarity">
    <text evidence="1">Belongs to the SecA family.</text>
</comment>
<organism>
    <name type="scientific">Rhodospirillum centenum (strain ATCC 51521 / SW)</name>
    <dbReference type="NCBI Taxonomy" id="414684"/>
    <lineage>
        <taxon>Bacteria</taxon>
        <taxon>Pseudomonadati</taxon>
        <taxon>Pseudomonadota</taxon>
        <taxon>Alphaproteobacteria</taxon>
        <taxon>Rhodospirillales</taxon>
        <taxon>Rhodospirillaceae</taxon>
        <taxon>Rhodospirillum</taxon>
    </lineage>
</organism>
<feature type="chain" id="PRO_1000145051" description="Protein translocase subunit SecA">
    <location>
        <begin position="1"/>
        <end position="918"/>
    </location>
</feature>
<feature type="region of interest" description="Disordered" evidence="2">
    <location>
        <begin position="876"/>
        <end position="918"/>
    </location>
</feature>
<feature type="compositionally biased region" description="Basic residues" evidence="2">
    <location>
        <begin position="908"/>
        <end position="918"/>
    </location>
</feature>
<feature type="binding site" evidence="1">
    <location>
        <position position="87"/>
    </location>
    <ligand>
        <name>ATP</name>
        <dbReference type="ChEBI" id="CHEBI:30616"/>
    </ligand>
</feature>
<feature type="binding site" evidence="1">
    <location>
        <begin position="105"/>
        <end position="109"/>
    </location>
    <ligand>
        <name>ATP</name>
        <dbReference type="ChEBI" id="CHEBI:30616"/>
    </ligand>
</feature>
<feature type="binding site" evidence="1">
    <location>
        <position position="500"/>
    </location>
    <ligand>
        <name>ATP</name>
        <dbReference type="ChEBI" id="CHEBI:30616"/>
    </ligand>
</feature>
<feature type="binding site" evidence="1">
    <location>
        <position position="902"/>
    </location>
    <ligand>
        <name>Zn(2+)</name>
        <dbReference type="ChEBI" id="CHEBI:29105"/>
    </ligand>
</feature>
<feature type="binding site" evidence="1">
    <location>
        <position position="904"/>
    </location>
    <ligand>
        <name>Zn(2+)</name>
        <dbReference type="ChEBI" id="CHEBI:29105"/>
    </ligand>
</feature>
<feature type="binding site" evidence="1">
    <location>
        <position position="913"/>
    </location>
    <ligand>
        <name>Zn(2+)</name>
        <dbReference type="ChEBI" id="CHEBI:29105"/>
    </ligand>
</feature>
<feature type="binding site" evidence="1">
    <location>
        <position position="914"/>
    </location>
    <ligand>
        <name>Zn(2+)</name>
        <dbReference type="ChEBI" id="CHEBI:29105"/>
    </ligand>
</feature>
<gene>
    <name evidence="1" type="primary">secA</name>
    <name type="ordered locus">RC1_2667</name>
</gene>
<dbReference type="EC" id="7.4.2.8" evidence="1"/>
<dbReference type="EMBL" id="CP000613">
    <property type="protein sequence ID" value="ACJ00042.1"/>
    <property type="molecule type" value="Genomic_DNA"/>
</dbReference>
<dbReference type="RefSeq" id="WP_012567823.1">
    <property type="nucleotide sequence ID" value="NC_011420.2"/>
</dbReference>
<dbReference type="SMR" id="B6IUW0"/>
<dbReference type="STRING" id="414684.RC1_2667"/>
<dbReference type="KEGG" id="rce:RC1_2667"/>
<dbReference type="eggNOG" id="COG0653">
    <property type="taxonomic scope" value="Bacteria"/>
</dbReference>
<dbReference type="HOGENOM" id="CLU_005314_3_0_5"/>
<dbReference type="OrthoDB" id="9805579at2"/>
<dbReference type="Proteomes" id="UP000001591">
    <property type="component" value="Chromosome"/>
</dbReference>
<dbReference type="GO" id="GO:0031522">
    <property type="term" value="C:cell envelope Sec protein transport complex"/>
    <property type="evidence" value="ECO:0007669"/>
    <property type="project" value="TreeGrafter"/>
</dbReference>
<dbReference type="GO" id="GO:0005829">
    <property type="term" value="C:cytosol"/>
    <property type="evidence" value="ECO:0007669"/>
    <property type="project" value="TreeGrafter"/>
</dbReference>
<dbReference type="GO" id="GO:0005886">
    <property type="term" value="C:plasma membrane"/>
    <property type="evidence" value="ECO:0007669"/>
    <property type="project" value="UniProtKB-SubCell"/>
</dbReference>
<dbReference type="GO" id="GO:0005524">
    <property type="term" value="F:ATP binding"/>
    <property type="evidence" value="ECO:0007669"/>
    <property type="project" value="UniProtKB-UniRule"/>
</dbReference>
<dbReference type="GO" id="GO:0046872">
    <property type="term" value="F:metal ion binding"/>
    <property type="evidence" value="ECO:0007669"/>
    <property type="project" value="UniProtKB-KW"/>
</dbReference>
<dbReference type="GO" id="GO:0008564">
    <property type="term" value="F:protein-exporting ATPase activity"/>
    <property type="evidence" value="ECO:0007669"/>
    <property type="project" value="UniProtKB-EC"/>
</dbReference>
<dbReference type="GO" id="GO:0065002">
    <property type="term" value="P:intracellular protein transmembrane transport"/>
    <property type="evidence" value="ECO:0007669"/>
    <property type="project" value="UniProtKB-UniRule"/>
</dbReference>
<dbReference type="GO" id="GO:0017038">
    <property type="term" value="P:protein import"/>
    <property type="evidence" value="ECO:0007669"/>
    <property type="project" value="InterPro"/>
</dbReference>
<dbReference type="GO" id="GO:0006605">
    <property type="term" value="P:protein targeting"/>
    <property type="evidence" value="ECO:0007669"/>
    <property type="project" value="UniProtKB-UniRule"/>
</dbReference>
<dbReference type="GO" id="GO:0043952">
    <property type="term" value="P:protein transport by the Sec complex"/>
    <property type="evidence" value="ECO:0007669"/>
    <property type="project" value="TreeGrafter"/>
</dbReference>
<dbReference type="CDD" id="cd17928">
    <property type="entry name" value="DEXDc_SecA"/>
    <property type="match status" value="1"/>
</dbReference>
<dbReference type="CDD" id="cd18803">
    <property type="entry name" value="SF2_C_secA"/>
    <property type="match status" value="1"/>
</dbReference>
<dbReference type="FunFam" id="3.90.1440.10:FF:000001">
    <property type="entry name" value="Preprotein translocase subunit SecA"/>
    <property type="match status" value="1"/>
</dbReference>
<dbReference type="FunFam" id="1.10.3060.10:FF:000003">
    <property type="entry name" value="Protein translocase subunit SecA"/>
    <property type="match status" value="1"/>
</dbReference>
<dbReference type="FunFam" id="3.40.50.300:FF:000334">
    <property type="entry name" value="Protein translocase subunit SecA"/>
    <property type="match status" value="1"/>
</dbReference>
<dbReference type="FunFam" id="3.40.50.300:FF:001790">
    <property type="entry name" value="Protein translocase subunit SecA"/>
    <property type="match status" value="1"/>
</dbReference>
<dbReference type="Gene3D" id="3.10.450.50">
    <property type="match status" value="1"/>
</dbReference>
<dbReference type="Gene3D" id="1.10.3060.10">
    <property type="entry name" value="Helical scaffold and wing domains of SecA"/>
    <property type="match status" value="1"/>
</dbReference>
<dbReference type="Gene3D" id="3.40.50.300">
    <property type="entry name" value="P-loop containing nucleotide triphosphate hydrolases"/>
    <property type="match status" value="2"/>
</dbReference>
<dbReference type="Gene3D" id="3.90.1440.10">
    <property type="entry name" value="SecA, preprotein cross-linking domain"/>
    <property type="match status" value="1"/>
</dbReference>
<dbReference type="HAMAP" id="MF_01382">
    <property type="entry name" value="SecA"/>
    <property type="match status" value="1"/>
</dbReference>
<dbReference type="InterPro" id="IPR014001">
    <property type="entry name" value="Helicase_ATP-bd"/>
</dbReference>
<dbReference type="InterPro" id="IPR001650">
    <property type="entry name" value="Helicase_C-like"/>
</dbReference>
<dbReference type="InterPro" id="IPR027417">
    <property type="entry name" value="P-loop_NTPase"/>
</dbReference>
<dbReference type="InterPro" id="IPR004027">
    <property type="entry name" value="SEC_C_motif"/>
</dbReference>
<dbReference type="InterPro" id="IPR000185">
    <property type="entry name" value="SecA"/>
</dbReference>
<dbReference type="InterPro" id="IPR020937">
    <property type="entry name" value="SecA_CS"/>
</dbReference>
<dbReference type="InterPro" id="IPR011115">
    <property type="entry name" value="SecA_DEAD"/>
</dbReference>
<dbReference type="InterPro" id="IPR014018">
    <property type="entry name" value="SecA_motor_DEAD"/>
</dbReference>
<dbReference type="InterPro" id="IPR011130">
    <property type="entry name" value="SecA_preprotein_X-link_dom"/>
</dbReference>
<dbReference type="InterPro" id="IPR044722">
    <property type="entry name" value="SecA_SF2_C"/>
</dbReference>
<dbReference type="InterPro" id="IPR011116">
    <property type="entry name" value="SecA_Wing/Scaffold"/>
</dbReference>
<dbReference type="InterPro" id="IPR036266">
    <property type="entry name" value="SecA_Wing/Scaffold_sf"/>
</dbReference>
<dbReference type="InterPro" id="IPR036670">
    <property type="entry name" value="SecA_X-link_sf"/>
</dbReference>
<dbReference type="NCBIfam" id="NF009538">
    <property type="entry name" value="PRK12904.1"/>
    <property type="match status" value="1"/>
</dbReference>
<dbReference type="NCBIfam" id="TIGR00963">
    <property type="entry name" value="secA"/>
    <property type="match status" value="1"/>
</dbReference>
<dbReference type="PANTHER" id="PTHR30612:SF0">
    <property type="entry name" value="CHLOROPLAST PROTEIN-TRANSPORTING ATPASE"/>
    <property type="match status" value="1"/>
</dbReference>
<dbReference type="PANTHER" id="PTHR30612">
    <property type="entry name" value="SECA INNER MEMBRANE COMPONENT OF SEC PROTEIN SECRETION SYSTEM"/>
    <property type="match status" value="1"/>
</dbReference>
<dbReference type="Pfam" id="PF21090">
    <property type="entry name" value="P-loop_SecA"/>
    <property type="match status" value="1"/>
</dbReference>
<dbReference type="Pfam" id="PF02810">
    <property type="entry name" value="SEC-C"/>
    <property type="match status" value="1"/>
</dbReference>
<dbReference type="Pfam" id="PF07517">
    <property type="entry name" value="SecA_DEAD"/>
    <property type="match status" value="1"/>
</dbReference>
<dbReference type="Pfam" id="PF01043">
    <property type="entry name" value="SecA_PP_bind"/>
    <property type="match status" value="1"/>
</dbReference>
<dbReference type="Pfam" id="PF07516">
    <property type="entry name" value="SecA_SW"/>
    <property type="match status" value="1"/>
</dbReference>
<dbReference type="PRINTS" id="PR00906">
    <property type="entry name" value="SECA"/>
</dbReference>
<dbReference type="SMART" id="SM00957">
    <property type="entry name" value="SecA_DEAD"/>
    <property type="match status" value="1"/>
</dbReference>
<dbReference type="SMART" id="SM00958">
    <property type="entry name" value="SecA_PP_bind"/>
    <property type="match status" value="1"/>
</dbReference>
<dbReference type="SUPFAM" id="SSF81886">
    <property type="entry name" value="Helical scaffold and wing domains of SecA"/>
    <property type="match status" value="1"/>
</dbReference>
<dbReference type="SUPFAM" id="SSF52540">
    <property type="entry name" value="P-loop containing nucleoside triphosphate hydrolases"/>
    <property type="match status" value="2"/>
</dbReference>
<dbReference type="SUPFAM" id="SSF81767">
    <property type="entry name" value="Pre-protein crosslinking domain of SecA"/>
    <property type="match status" value="1"/>
</dbReference>
<dbReference type="PROSITE" id="PS01312">
    <property type="entry name" value="SECA"/>
    <property type="match status" value="1"/>
</dbReference>
<dbReference type="PROSITE" id="PS51196">
    <property type="entry name" value="SECA_MOTOR_DEAD"/>
    <property type="match status" value="1"/>
</dbReference>
<protein>
    <recommendedName>
        <fullName evidence="1">Protein translocase subunit SecA</fullName>
        <ecNumber evidence="1">7.4.2.8</ecNumber>
    </recommendedName>
</protein>
<accession>B6IUW0</accession>
<reference key="1">
    <citation type="submission" date="2007-03" db="EMBL/GenBank/DDBJ databases">
        <title>Genome sequence of Rhodospirillum centenum.</title>
        <authorList>
            <person name="Touchman J.W."/>
            <person name="Bauer C."/>
            <person name="Blankenship R.E."/>
        </authorList>
    </citation>
    <scope>NUCLEOTIDE SEQUENCE [LARGE SCALE GENOMIC DNA]</scope>
    <source>
        <strain>ATCC 51521 / SW</strain>
    </source>
</reference>
<evidence type="ECO:0000255" key="1">
    <source>
        <dbReference type="HAMAP-Rule" id="MF_01382"/>
    </source>
</evidence>
<evidence type="ECO:0000256" key="2">
    <source>
        <dbReference type="SAM" id="MobiDB-lite"/>
    </source>
</evidence>
<proteinExistence type="inferred from homology"/>
<sequence length="918" mass="103159">MFGAIARKLFGNANDRVVKGLRKQVEAINAIEPKLTGLSDAELQMRTDWLRDRLAKGETLDDILPDAFATVREAAKRTLGQRHFDVQLMGGMVLHTGKIAEMRTGEGKTLVATLAVYLNALEGKGVHVVTVNDYLAKRDSGWMGQIYRFLGLSVGCIVHGLDDAERRAAYAADITYGTNNEFGFDYLRDNMKYRLADMVQRPFNFAIVDEVDSILIDEARTPLIISGPSTDSSELYIALDKVVRETVQDGDFEKDEKARAVSLTEGGTEKVAQRLIEIGLLKTGDLYDIHNVTLVHHVNQALRAHKLFTRDVDYIVKDDKVVIIDEFTGRMMEGRRYSEGLHQALEAKEGVTIQRENQTLASITFQNYFRLYPKLAGMTGTAMTEAAEFMEIYGLPVVDMPTNLPVRRKDQDDEVYRTADEKYAAIITLIEECRARQQPVLVGTVSIEKSELLSDFLKKKKVPHNVLNARYHEQEAYIVAQAGRPGAVTIATNMAGRGTDIQLGGNLEMRIEHELSDLPEGPEREAAIARIRDEIAAAKEVVLKAGGLYVVGTERHESRRIDNQLRGRSGRQGDPGASKFFLSLEDDLMRIFGSQRLDGMLQKLGLQEGEAIIHPWINKALEKAQTKVEAHNFDIRKNLLKYDNVMNDQRKVVYEQRRDVMDAEDVQDTVVSMRHEVIQEMVSKAIPPNAYAEQWNTDQLHEEVMRVLGADLPVKEWAKEEGIADAEIVERLTRFADETMAEKEAAYGATLMRSIEKSLLLQILDQQWKDHLLNLDHLRQGINLRAYAQRDPLNEYKREAFGLFETMLASLREQVTTVLMHVQVRQADADLPTPPEPVGELTREDPALVPAGAEALPPGMVRRADDQRLRPQAYGAGALPVAETLERDTPESWRNTPRNAPCPCGSGKKYKHCHGQAR</sequence>
<keyword id="KW-0067">ATP-binding</keyword>
<keyword id="KW-0997">Cell inner membrane</keyword>
<keyword id="KW-1003">Cell membrane</keyword>
<keyword id="KW-0963">Cytoplasm</keyword>
<keyword id="KW-0472">Membrane</keyword>
<keyword id="KW-0479">Metal-binding</keyword>
<keyword id="KW-0547">Nucleotide-binding</keyword>
<keyword id="KW-0653">Protein transport</keyword>
<keyword id="KW-1185">Reference proteome</keyword>
<keyword id="KW-1278">Translocase</keyword>
<keyword id="KW-0811">Translocation</keyword>
<keyword id="KW-0813">Transport</keyword>
<keyword id="KW-0862">Zinc</keyword>